<evidence type="ECO:0000250" key="1">
    <source>
        <dbReference type="UniProtKB" id="C8VQG9"/>
    </source>
</evidence>
<evidence type="ECO:0000256" key="2">
    <source>
        <dbReference type="SAM" id="MobiDB-lite"/>
    </source>
</evidence>
<evidence type="ECO:0000269" key="3">
    <source>
    </source>
</evidence>
<evidence type="ECO:0000303" key="4">
    <source>
    </source>
</evidence>
<evidence type="ECO:0000305" key="5"/>
<keyword id="KW-0489">Methyltransferase</keyword>
<keyword id="KW-0539">Nucleus</keyword>
<keyword id="KW-0949">S-adenosyl-L-methionine</keyword>
<keyword id="KW-0749">Sporulation</keyword>
<keyword id="KW-0804">Transcription</keyword>
<keyword id="KW-0805">Transcription regulation</keyword>
<keyword id="KW-0808">Transferase</keyword>
<keyword id="KW-0843">Virulence</keyword>
<comment type="function">
    <text evidence="1 3">Methyltransferase that performs automethylation (By similarity). No other methyl-accepting substrate has been identified yet (By similarity). Component of the velvet transcription factor complex that acts as a global regulator for secondary metabolite gene expression (PubMed:23826217). Controls the expression of the gamma-pentyl-pyrone gene clusters (PubMed:23826217). Required for the expression of cellulase (PubMed:23826217). Regulates asexual sporulation (conidiation) by environmental stimuli such as light and/or mechanical injury (PubMed:23826217). Required for oxidative stress tolerance (PubMed:23826217). Also plays a role in defense and parasitism on other fungi (PubMed:23826217).</text>
</comment>
<comment type="catalytic activity">
    <reaction evidence="1">
        <text>L-methionyl-[protein] + S-adenosyl-L-methionine = S-methyl-L-methionyl-[protein] + S-adenosyl-L-homocysteine</text>
        <dbReference type="Rhea" id="RHEA:60560"/>
        <dbReference type="Rhea" id="RHEA-COMP:12313"/>
        <dbReference type="Rhea" id="RHEA-COMP:15592"/>
        <dbReference type="ChEBI" id="CHEBI:16044"/>
        <dbReference type="ChEBI" id="CHEBI:57856"/>
        <dbReference type="ChEBI" id="CHEBI:59789"/>
        <dbReference type="ChEBI" id="CHEBI:142742"/>
    </reaction>
    <physiologicalReaction direction="left-to-right" evidence="1">
        <dbReference type="Rhea" id="RHEA:60561"/>
    </physiologicalReaction>
</comment>
<comment type="subunit">
    <text evidence="1">Component of the heterotrimeric velvet complex composed of LAE1, VEL1 and VEL2; VEL1 acting as a bridging protein between LAE1 and VEL2 (By similarity).</text>
</comment>
<comment type="subcellular location">
    <subcellularLocation>
        <location evidence="1">Nucleus</location>
    </subcellularLocation>
</comment>
<comment type="disruption phenotype">
    <text evidence="3">Leads to reduced growth rate on plates with D-glucose or D-galactose, decreases the expression of mycoparasitism-associated genes, and impairs conidiation (PubMed:23826217).</text>
</comment>
<comment type="similarity">
    <text evidence="5">Belongs to the methyltransferase superfamily. LaeA methyltransferase family.</text>
</comment>
<proteinExistence type="inferred from homology"/>
<reference key="1">
    <citation type="journal article" date="2013" name="PLoS ONE">
        <title>The putative protein methyltransferase LAE1 of Trichoderma atroviride is a key regulator of asexual development and mycoparasitism.</title>
        <authorList>
            <person name="Karimi Aghcheh R."/>
            <person name="Druzhinina I.S."/>
            <person name="Kubicek C.P."/>
        </authorList>
    </citation>
    <scope>NUCLEOTIDE SEQUENCE [GENOMIC DNA]</scope>
    <scope>DISRUPTION PHENOTYPE</scope>
    <scope>FUNCTION</scope>
    <source>
        <strain>P1 / ATCC 74058</strain>
    </source>
</reference>
<organism>
    <name type="scientific">Hypocrea atroviridis</name>
    <name type="common">Trichoderma atroviride</name>
    <dbReference type="NCBI Taxonomy" id="63577"/>
    <lineage>
        <taxon>Eukaryota</taxon>
        <taxon>Fungi</taxon>
        <taxon>Dikarya</taxon>
        <taxon>Ascomycota</taxon>
        <taxon>Pezizomycotina</taxon>
        <taxon>Sordariomycetes</taxon>
        <taxon>Hypocreomycetidae</taxon>
        <taxon>Hypocreales</taxon>
        <taxon>Hypocreaceae</taxon>
        <taxon>Trichoderma</taxon>
    </lineage>
</organism>
<accession>T1T504</accession>
<name>LAEA_HYPAT</name>
<protein>
    <recommendedName>
        <fullName evidence="5">Secondary metabolism regulator LAE1</fullName>
    </recommendedName>
    <alternativeName>
        <fullName evidence="5">Methyltransferase LAE1</fullName>
        <ecNumber evidence="1">2.1.1.-</ecNumber>
    </alternativeName>
    <alternativeName>
        <fullName evidence="5">Velvet complex subunit LAE1</fullName>
    </alternativeName>
</protein>
<gene>
    <name evidence="4" type="primary">LAE1</name>
</gene>
<dbReference type="EC" id="2.1.1.-" evidence="1"/>
<dbReference type="EMBL" id="KC174792">
    <property type="protein sequence ID" value="AGT59504.1"/>
    <property type="molecule type" value="Genomic_DNA"/>
</dbReference>
<dbReference type="SMR" id="T1T504"/>
<dbReference type="OMA" id="CDFYAPF"/>
<dbReference type="GO" id="GO:0005634">
    <property type="term" value="C:nucleus"/>
    <property type="evidence" value="ECO:0007669"/>
    <property type="project" value="UniProtKB-SubCell"/>
</dbReference>
<dbReference type="GO" id="GO:0008168">
    <property type="term" value="F:methyltransferase activity"/>
    <property type="evidence" value="ECO:0007669"/>
    <property type="project" value="UniProtKB-KW"/>
</dbReference>
<dbReference type="GO" id="GO:0032259">
    <property type="term" value="P:methylation"/>
    <property type="evidence" value="ECO:0007669"/>
    <property type="project" value="UniProtKB-KW"/>
</dbReference>
<dbReference type="GO" id="GO:0030435">
    <property type="term" value="P:sporulation resulting in formation of a cellular spore"/>
    <property type="evidence" value="ECO:0007669"/>
    <property type="project" value="UniProtKB-KW"/>
</dbReference>
<dbReference type="CDD" id="cd02440">
    <property type="entry name" value="AdoMet_MTases"/>
    <property type="match status" value="1"/>
</dbReference>
<dbReference type="Gene3D" id="3.40.50.150">
    <property type="entry name" value="Vaccinia Virus protein VP39"/>
    <property type="match status" value="1"/>
</dbReference>
<dbReference type="InterPro" id="IPR029063">
    <property type="entry name" value="SAM-dependent_MTases_sf"/>
</dbReference>
<dbReference type="PANTHER" id="PTHR43591">
    <property type="entry name" value="METHYLTRANSFERASE"/>
    <property type="match status" value="1"/>
</dbReference>
<dbReference type="PANTHER" id="PTHR43591:SF30">
    <property type="entry name" value="PROTEIN-METHIONINE METHYLTRANSFERASE LAEA"/>
    <property type="match status" value="1"/>
</dbReference>
<dbReference type="Pfam" id="PF13489">
    <property type="entry name" value="Methyltransf_23"/>
    <property type="match status" value="1"/>
</dbReference>
<dbReference type="SUPFAM" id="SSF53335">
    <property type="entry name" value="S-adenosyl-L-methionine-dependent methyltransferases"/>
    <property type="match status" value="1"/>
</dbReference>
<sequence length="349" mass="40063">MSSRNAPSGCVAPSPATAAPPSPTNLRLTVGQSGSESANEPGGEPEERILQDGFWEYGRFYGNWKKGKYNFPIDKEETSRLDILHKYFIVETEDRVTSVPLDKEGSPKIMDLGTGTGIWAFHVVEGYIPNAQIMAVDLNQIQPALIPRGVTTKQFDLEEPSWEPLLRDCDLIHLRLLYGSIRDDLWADTYRKIFEHLAPGGYVEHLEIDWTPQWDGEDHPTHSAIREWSQQFHRAMHRYRRSVKVSSEDTKRMMEAAGFTEFKETKIRCYLNPWSTDRHQREAARWFNLALGLGLEAMSLMPMIDMLHMKQEDVVDLCKRVKAETCVLRYHAYFTLHTWTAKKPASPPQ</sequence>
<feature type="chain" id="PRO_0000435754" description="Secondary metabolism regulator LAE1">
    <location>
        <begin position="1"/>
        <end position="349"/>
    </location>
</feature>
<feature type="region of interest" description="Disordered" evidence="2">
    <location>
        <begin position="1"/>
        <end position="46"/>
    </location>
</feature>
<feature type="compositionally biased region" description="Polar residues" evidence="2">
    <location>
        <begin position="25"/>
        <end position="38"/>
    </location>
</feature>